<protein>
    <recommendedName>
        <fullName>F107 fimbrial protein</fullName>
    </recommendedName>
</protein>
<accession>P25394</accession>
<name>FMF7_ECOLX</name>
<reference key="1">
    <citation type="journal article" date="1992" name="Infect. Immun.">
        <title>Characterization of F107 fimbriae of Escherichia coli 107/86, which causes edema disease in pigs, and nucleotide sequence of the F107 major fimbrial subunit gene, fedA.</title>
        <authorList>
            <person name="Imberechts H.A."/>
            <person name="de Greve H."/>
            <person name="Schlicker C."/>
            <person name="Bouchet H."/>
            <person name="Pohl P."/>
            <person name="Charlier G."/>
            <person name="Vandekerckhove J."/>
            <person name="van Damme J."/>
            <person name="van Montagu M."/>
            <person name="Lintermans P."/>
        </authorList>
    </citation>
    <scope>NUCLEOTIDE SEQUENCE [GENOMIC DNA]</scope>
    <source>
        <strain>107/86</strain>
    </source>
</reference>
<proteinExistence type="inferred from homology"/>
<keyword id="KW-1015">Disulfide bond</keyword>
<keyword id="KW-0281">Fimbrium</keyword>
<keyword id="KW-0732">Signal</keyword>
<comment type="function">
    <text>Fimbriae (also called pili), polar filaments radiating from the surface of the bacterium to a length of 0.5-1.5 micrometers and numbering 100-300 per cell, enable bacteria to colonize the epithelium of specific host organs.</text>
</comment>
<comment type="subcellular location">
    <subcellularLocation>
        <location>Fimbrium</location>
    </subcellularLocation>
</comment>
<comment type="similarity">
    <text evidence="1">Belongs to the fimbrial protein family.</text>
</comment>
<evidence type="ECO:0000305" key="1"/>
<sequence>MKRLVFISFVALSMTAGSAMAQQGDVKFFGNVSATTCNLTPQISGTVGDTIQLGTVAPSGTGSEIPFALKASSNVGGCASLSTKTADITWSGQLTEKGFANQGGVANDSYVALKTVNGKTQGQEVKASNSTVSFDASKATTEGFKFTAQLKGGQTPGDFQGAAAYAVTYK</sequence>
<dbReference type="EMBL" id="M61713">
    <property type="protein sequence ID" value="AAA23735.1"/>
    <property type="molecule type" value="Genomic_DNA"/>
</dbReference>
<dbReference type="EMBL" id="M61713">
    <property type="protein sequence ID" value="AAA23734.1"/>
    <property type="molecule type" value="Genomic_DNA"/>
</dbReference>
<dbReference type="PIR" id="A43841">
    <property type="entry name" value="A43841"/>
</dbReference>
<dbReference type="SMR" id="P25394"/>
<dbReference type="GO" id="GO:0009289">
    <property type="term" value="C:pilus"/>
    <property type="evidence" value="ECO:0007669"/>
    <property type="project" value="UniProtKB-SubCell"/>
</dbReference>
<dbReference type="GO" id="GO:0007155">
    <property type="term" value="P:cell adhesion"/>
    <property type="evidence" value="ECO:0007669"/>
    <property type="project" value="InterPro"/>
</dbReference>
<dbReference type="Gene3D" id="2.60.40.1090">
    <property type="entry name" value="Fimbrial-type adhesion domain"/>
    <property type="match status" value="1"/>
</dbReference>
<dbReference type="InterPro" id="IPR036937">
    <property type="entry name" value="Adhesion_dom_fimbrial_sf"/>
</dbReference>
<dbReference type="InterPro" id="IPR008966">
    <property type="entry name" value="Adhesion_dom_sf"/>
</dbReference>
<dbReference type="SUPFAM" id="SSF49401">
    <property type="entry name" value="Bacterial adhesins"/>
    <property type="match status" value="1"/>
</dbReference>
<organism>
    <name type="scientific">Escherichia coli</name>
    <dbReference type="NCBI Taxonomy" id="562"/>
    <lineage>
        <taxon>Bacteria</taxon>
        <taxon>Pseudomonadati</taxon>
        <taxon>Pseudomonadota</taxon>
        <taxon>Gammaproteobacteria</taxon>
        <taxon>Enterobacterales</taxon>
        <taxon>Enterobacteriaceae</taxon>
        <taxon>Escherichia</taxon>
    </lineage>
</organism>
<gene>
    <name type="primary">fedA</name>
</gene>
<feature type="signal peptide">
    <location>
        <begin position="1"/>
        <end position="21"/>
    </location>
</feature>
<feature type="chain" id="PRO_0000009191" description="F107 fimbrial protein">
    <location>
        <begin position="22"/>
        <end position="170"/>
    </location>
</feature>
<feature type="disulfide bond" evidence="1">
    <location>
        <begin position="37"/>
        <end position="78"/>
    </location>
</feature>